<gene>
    <name evidence="1" type="primary">ispG</name>
    <name type="ordered locus">PputGB1_0896</name>
</gene>
<proteinExistence type="inferred from homology"/>
<comment type="function">
    <text evidence="1">Converts 2C-methyl-D-erythritol 2,4-cyclodiphosphate (ME-2,4cPP) into 1-hydroxy-2-methyl-2-(E)-butenyl 4-diphosphate.</text>
</comment>
<comment type="catalytic activity">
    <reaction evidence="1">
        <text>(2E)-4-hydroxy-3-methylbut-2-enyl diphosphate + oxidized [flavodoxin] + H2O + 2 H(+) = 2-C-methyl-D-erythritol 2,4-cyclic diphosphate + reduced [flavodoxin]</text>
        <dbReference type="Rhea" id="RHEA:43604"/>
        <dbReference type="Rhea" id="RHEA-COMP:10622"/>
        <dbReference type="Rhea" id="RHEA-COMP:10623"/>
        <dbReference type="ChEBI" id="CHEBI:15377"/>
        <dbReference type="ChEBI" id="CHEBI:15378"/>
        <dbReference type="ChEBI" id="CHEBI:57618"/>
        <dbReference type="ChEBI" id="CHEBI:58210"/>
        <dbReference type="ChEBI" id="CHEBI:58483"/>
        <dbReference type="ChEBI" id="CHEBI:128753"/>
        <dbReference type="EC" id="1.17.7.3"/>
    </reaction>
</comment>
<comment type="cofactor">
    <cofactor evidence="1">
        <name>[4Fe-4S] cluster</name>
        <dbReference type="ChEBI" id="CHEBI:49883"/>
    </cofactor>
    <text evidence="1">Binds 1 [4Fe-4S] cluster.</text>
</comment>
<comment type="pathway">
    <text evidence="1">Isoprenoid biosynthesis; isopentenyl diphosphate biosynthesis via DXP pathway; isopentenyl diphosphate from 1-deoxy-D-xylulose 5-phosphate: step 5/6.</text>
</comment>
<comment type="similarity">
    <text evidence="1">Belongs to the IspG family.</text>
</comment>
<reference key="1">
    <citation type="submission" date="2008-01" db="EMBL/GenBank/DDBJ databases">
        <title>Complete sequence of Pseudomonas putida GB-1.</title>
        <authorList>
            <consortium name="US DOE Joint Genome Institute"/>
            <person name="Copeland A."/>
            <person name="Lucas S."/>
            <person name="Lapidus A."/>
            <person name="Barry K."/>
            <person name="Glavina del Rio T."/>
            <person name="Dalin E."/>
            <person name="Tice H."/>
            <person name="Pitluck S."/>
            <person name="Bruce D."/>
            <person name="Goodwin L."/>
            <person name="Chertkov O."/>
            <person name="Brettin T."/>
            <person name="Detter J.C."/>
            <person name="Han C."/>
            <person name="Kuske C.R."/>
            <person name="Schmutz J."/>
            <person name="Larimer F."/>
            <person name="Land M."/>
            <person name="Hauser L."/>
            <person name="Kyrpides N."/>
            <person name="Kim E."/>
            <person name="McCarthy J.K."/>
            <person name="Richardson P."/>
        </authorList>
    </citation>
    <scope>NUCLEOTIDE SEQUENCE [LARGE SCALE GENOMIC DNA]</scope>
    <source>
        <strain>GB-1</strain>
    </source>
</reference>
<name>ISPG_PSEPG</name>
<organism>
    <name type="scientific">Pseudomonas putida (strain GB-1)</name>
    <dbReference type="NCBI Taxonomy" id="76869"/>
    <lineage>
        <taxon>Bacteria</taxon>
        <taxon>Pseudomonadati</taxon>
        <taxon>Pseudomonadota</taxon>
        <taxon>Gammaproteobacteria</taxon>
        <taxon>Pseudomonadales</taxon>
        <taxon>Pseudomonadaceae</taxon>
        <taxon>Pseudomonas</taxon>
    </lineage>
</organism>
<evidence type="ECO:0000255" key="1">
    <source>
        <dbReference type="HAMAP-Rule" id="MF_00159"/>
    </source>
</evidence>
<dbReference type="EC" id="1.17.7.3" evidence="1"/>
<dbReference type="EMBL" id="CP000926">
    <property type="protein sequence ID" value="ABY96806.1"/>
    <property type="molecule type" value="Genomic_DNA"/>
</dbReference>
<dbReference type="RefSeq" id="WP_012270599.1">
    <property type="nucleotide sequence ID" value="NC_010322.1"/>
</dbReference>
<dbReference type="SMR" id="B0KPI7"/>
<dbReference type="KEGG" id="ppg:PputGB1_0896"/>
<dbReference type="eggNOG" id="COG0821">
    <property type="taxonomic scope" value="Bacteria"/>
</dbReference>
<dbReference type="HOGENOM" id="CLU_042258_0_0_6"/>
<dbReference type="UniPathway" id="UPA00056">
    <property type="reaction ID" value="UER00096"/>
</dbReference>
<dbReference type="Proteomes" id="UP000002157">
    <property type="component" value="Chromosome"/>
</dbReference>
<dbReference type="GO" id="GO:0051539">
    <property type="term" value="F:4 iron, 4 sulfur cluster binding"/>
    <property type="evidence" value="ECO:0007669"/>
    <property type="project" value="UniProtKB-UniRule"/>
</dbReference>
<dbReference type="GO" id="GO:0046429">
    <property type="term" value="F:4-hydroxy-3-methylbut-2-en-1-yl diphosphate synthase activity (ferredoxin)"/>
    <property type="evidence" value="ECO:0007669"/>
    <property type="project" value="UniProtKB-UniRule"/>
</dbReference>
<dbReference type="GO" id="GO:0141197">
    <property type="term" value="F:4-hydroxy-3-methylbut-2-enyl-diphosphate synthase activity (flavodoxin)"/>
    <property type="evidence" value="ECO:0007669"/>
    <property type="project" value="UniProtKB-EC"/>
</dbReference>
<dbReference type="GO" id="GO:0005506">
    <property type="term" value="F:iron ion binding"/>
    <property type="evidence" value="ECO:0007669"/>
    <property type="project" value="InterPro"/>
</dbReference>
<dbReference type="GO" id="GO:0019288">
    <property type="term" value="P:isopentenyl diphosphate biosynthetic process, methylerythritol 4-phosphate pathway"/>
    <property type="evidence" value="ECO:0007669"/>
    <property type="project" value="UniProtKB-UniRule"/>
</dbReference>
<dbReference type="GO" id="GO:0016114">
    <property type="term" value="P:terpenoid biosynthetic process"/>
    <property type="evidence" value="ECO:0007669"/>
    <property type="project" value="InterPro"/>
</dbReference>
<dbReference type="FunFam" id="3.20.20.20:FF:000001">
    <property type="entry name" value="4-hydroxy-3-methylbut-2-en-1-yl diphosphate synthase (flavodoxin)"/>
    <property type="match status" value="1"/>
</dbReference>
<dbReference type="Gene3D" id="3.20.20.20">
    <property type="entry name" value="Dihydropteroate synthase-like"/>
    <property type="match status" value="1"/>
</dbReference>
<dbReference type="Gene3D" id="3.30.413.10">
    <property type="entry name" value="Sulfite Reductase Hemoprotein, domain 1"/>
    <property type="match status" value="1"/>
</dbReference>
<dbReference type="HAMAP" id="MF_00159">
    <property type="entry name" value="IspG"/>
    <property type="match status" value="1"/>
</dbReference>
<dbReference type="InterPro" id="IPR011005">
    <property type="entry name" value="Dihydropteroate_synth-like_sf"/>
</dbReference>
<dbReference type="InterPro" id="IPR016425">
    <property type="entry name" value="IspG_bac"/>
</dbReference>
<dbReference type="InterPro" id="IPR004588">
    <property type="entry name" value="IspG_bac-typ"/>
</dbReference>
<dbReference type="InterPro" id="IPR045854">
    <property type="entry name" value="NO2/SO3_Rdtase_4Fe4S_sf"/>
</dbReference>
<dbReference type="NCBIfam" id="TIGR00612">
    <property type="entry name" value="ispG_gcpE"/>
    <property type="match status" value="1"/>
</dbReference>
<dbReference type="NCBIfam" id="NF001540">
    <property type="entry name" value="PRK00366.1"/>
    <property type="match status" value="1"/>
</dbReference>
<dbReference type="PANTHER" id="PTHR30454">
    <property type="entry name" value="4-HYDROXY-3-METHYLBUT-2-EN-1-YL DIPHOSPHATE SYNTHASE"/>
    <property type="match status" value="1"/>
</dbReference>
<dbReference type="PANTHER" id="PTHR30454:SF0">
    <property type="entry name" value="4-HYDROXY-3-METHYLBUT-2-EN-1-YL DIPHOSPHATE SYNTHASE (FERREDOXIN), CHLOROPLASTIC"/>
    <property type="match status" value="1"/>
</dbReference>
<dbReference type="Pfam" id="PF04551">
    <property type="entry name" value="GcpE"/>
    <property type="match status" value="1"/>
</dbReference>
<dbReference type="PIRSF" id="PIRSF004640">
    <property type="entry name" value="IspG"/>
    <property type="match status" value="1"/>
</dbReference>
<dbReference type="SUPFAM" id="SSF51412">
    <property type="entry name" value="Inosine monophosphate dehydrogenase (IMPDH)"/>
    <property type="match status" value="1"/>
</dbReference>
<dbReference type="SUPFAM" id="SSF56014">
    <property type="entry name" value="Nitrite and sulphite reductase 4Fe-4S domain-like"/>
    <property type="match status" value="1"/>
</dbReference>
<protein>
    <recommendedName>
        <fullName evidence="1">4-hydroxy-3-methylbut-2-en-1-yl diphosphate synthase (flavodoxin)</fullName>
        <ecNumber evidence="1">1.17.7.3</ecNumber>
    </recommendedName>
    <alternativeName>
        <fullName evidence="1">1-hydroxy-2-methyl-2-(E)-butenyl 4-diphosphate synthase</fullName>
    </alternativeName>
</protein>
<sequence>MHGESPIKRRESRKIWVGNVPVGGDAPIAVQSMTNTDTNDVAATVAQIQRLVDAGVDIVRVSVPDMDAAEAFGKIKQLVSVPLVADIHFDYKIALRVAELGVDCLRINPGNIGREDRVRAVVDAARDRGIPIRIGVNAGSLEKDLQKKYGEPTPAALVESALRHVEHLDRLDFQDFKVSVKASDVFMAVEAYRLLAKQIVQPLHLGITEAGGLRSGTVKSAVGLGMLLAEGIGDTIRISLAADPVEEVKVGYDILKSLHLRSRGINFIACPSCSRQNFDVVKTMNELEGRLEDLLVPLDVAVIGCVVNGPGEAKEAHVGLTGGTPNLIYIDGKPAQKLTNDNLVDELEKLIRQKAAEKVEADAALIVRG</sequence>
<keyword id="KW-0004">4Fe-4S</keyword>
<keyword id="KW-0408">Iron</keyword>
<keyword id="KW-0411">Iron-sulfur</keyword>
<keyword id="KW-0414">Isoprene biosynthesis</keyword>
<keyword id="KW-0479">Metal-binding</keyword>
<keyword id="KW-0560">Oxidoreductase</keyword>
<accession>B0KPI7</accession>
<feature type="chain" id="PRO_1000076891" description="4-hydroxy-3-methylbut-2-en-1-yl diphosphate synthase (flavodoxin)">
    <location>
        <begin position="1"/>
        <end position="369"/>
    </location>
</feature>
<feature type="binding site" evidence="1">
    <location>
        <position position="270"/>
    </location>
    <ligand>
        <name>[4Fe-4S] cluster</name>
        <dbReference type="ChEBI" id="CHEBI:49883"/>
    </ligand>
</feature>
<feature type="binding site" evidence="1">
    <location>
        <position position="273"/>
    </location>
    <ligand>
        <name>[4Fe-4S] cluster</name>
        <dbReference type="ChEBI" id="CHEBI:49883"/>
    </ligand>
</feature>
<feature type="binding site" evidence="1">
    <location>
        <position position="305"/>
    </location>
    <ligand>
        <name>[4Fe-4S] cluster</name>
        <dbReference type="ChEBI" id="CHEBI:49883"/>
    </ligand>
</feature>
<feature type="binding site" evidence="1">
    <location>
        <position position="312"/>
    </location>
    <ligand>
        <name>[4Fe-4S] cluster</name>
        <dbReference type="ChEBI" id="CHEBI:49883"/>
    </ligand>
</feature>